<reference key="1">
    <citation type="journal article" date="2003" name="Nature">
        <title>The genome sequence of Bacillus anthracis Ames and comparison to closely related bacteria.</title>
        <authorList>
            <person name="Read T.D."/>
            <person name="Peterson S.N."/>
            <person name="Tourasse N.J."/>
            <person name="Baillie L.W."/>
            <person name="Paulsen I.T."/>
            <person name="Nelson K.E."/>
            <person name="Tettelin H."/>
            <person name="Fouts D.E."/>
            <person name="Eisen J.A."/>
            <person name="Gill S.R."/>
            <person name="Holtzapple E.K."/>
            <person name="Okstad O.A."/>
            <person name="Helgason E."/>
            <person name="Rilstone J."/>
            <person name="Wu M."/>
            <person name="Kolonay J.F."/>
            <person name="Beanan M.J."/>
            <person name="Dodson R.J."/>
            <person name="Brinkac L.M."/>
            <person name="Gwinn M.L."/>
            <person name="DeBoy R.T."/>
            <person name="Madpu R."/>
            <person name="Daugherty S.C."/>
            <person name="Durkin A.S."/>
            <person name="Haft D.H."/>
            <person name="Nelson W.C."/>
            <person name="Peterson J.D."/>
            <person name="Pop M."/>
            <person name="Khouri H.M."/>
            <person name="Radune D."/>
            <person name="Benton J.L."/>
            <person name="Mahamoud Y."/>
            <person name="Jiang L."/>
            <person name="Hance I.R."/>
            <person name="Weidman J.F."/>
            <person name="Berry K.J."/>
            <person name="Plaut R.D."/>
            <person name="Wolf A.M."/>
            <person name="Watkins K.L."/>
            <person name="Nierman W.C."/>
            <person name="Hazen A."/>
            <person name="Cline R.T."/>
            <person name="Redmond C."/>
            <person name="Thwaite J.E."/>
            <person name="White O."/>
            <person name="Salzberg S.L."/>
            <person name="Thomason B."/>
            <person name="Friedlander A.M."/>
            <person name="Koehler T.M."/>
            <person name="Hanna P.C."/>
            <person name="Kolstoe A.-B."/>
            <person name="Fraser C.M."/>
        </authorList>
    </citation>
    <scope>NUCLEOTIDE SEQUENCE [LARGE SCALE GENOMIC DNA]</scope>
    <source>
        <strain>Ames / isolate Porton</strain>
    </source>
</reference>
<reference key="2">
    <citation type="submission" date="2004-01" db="EMBL/GenBank/DDBJ databases">
        <title>Complete genome sequence of Bacillus anthracis Sterne.</title>
        <authorList>
            <person name="Brettin T.S."/>
            <person name="Bruce D."/>
            <person name="Challacombe J.F."/>
            <person name="Gilna P."/>
            <person name="Han C."/>
            <person name="Hill K."/>
            <person name="Hitchcock P."/>
            <person name="Jackson P."/>
            <person name="Keim P."/>
            <person name="Longmire J."/>
            <person name="Lucas S."/>
            <person name="Okinaka R."/>
            <person name="Richardson P."/>
            <person name="Rubin E."/>
            <person name="Tice H."/>
        </authorList>
    </citation>
    <scope>NUCLEOTIDE SEQUENCE [LARGE SCALE GENOMIC DNA]</scope>
    <source>
        <strain>Sterne</strain>
    </source>
</reference>
<reference key="3">
    <citation type="journal article" date="2009" name="J. Bacteriol.">
        <title>The complete genome sequence of Bacillus anthracis Ames 'Ancestor'.</title>
        <authorList>
            <person name="Ravel J."/>
            <person name="Jiang L."/>
            <person name="Stanley S.T."/>
            <person name="Wilson M.R."/>
            <person name="Decker R.S."/>
            <person name="Read T.D."/>
            <person name="Worsham P."/>
            <person name="Keim P.S."/>
            <person name="Salzberg S.L."/>
            <person name="Fraser-Liggett C.M."/>
            <person name="Rasko D.A."/>
        </authorList>
    </citation>
    <scope>NUCLEOTIDE SEQUENCE [LARGE SCALE GENOMIC DNA]</scope>
    <source>
        <strain>Ames ancestor</strain>
    </source>
</reference>
<name>PYRDB_BACAN</name>
<gene>
    <name type="primary">pyrD</name>
    <name type="ordered locus">BA_4023</name>
    <name type="ordered locus">GBAA_4023</name>
    <name type="ordered locus">BAS3735</name>
</gene>
<dbReference type="EC" id="1.3.1.14"/>
<dbReference type="EMBL" id="AE016879">
    <property type="protein sequence ID" value="AAP27750.1"/>
    <property type="molecule type" value="Genomic_DNA"/>
</dbReference>
<dbReference type="EMBL" id="AE017334">
    <property type="protein sequence ID" value="AAT33140.1"/>
    <property type="molecule type" value="Genomic_DNA"/>
</dbReference>
<dbReference type="EMBL" id="AE017225">
    <property type="protein sequence ID" value="AAT56037.1"/>
    <property type="molecule type" value="Genomic_DNA"/>
</dbReference>
<dbReference type="RefSeq" id="NP_846264.1">
    <property type="nucleotide sequence ID" value="NC_003997.3"/>
</dbReference>
<dbReference type="RefSeq" id="WP_001081057.1">
    <property type="nucleotide sequence ID" value="NZ_WXXJ01000026.1"/>
</dbReference>
<dbReference type="RefSeq" id="YP_029986.1">
    <property type="nucleotide sequence ID" value="NC_005945.1"/>
</dbReference>
<dbReference type="SMR" id="Q81WF4"/>
<dbReference type="IntAct" id="Q81WF4">
    <property type="interactions" value="2"/>
</dbReference>
<dbReference type="STRING" id="261594.GBAA_4023"/>
<dbReference type="DNASU" id="1086679"/>
<dbReference type="GeneID" id="83637592"/>
<dbReference type="KEGG" id="ban:BA_4023"/>
<dbReference type="KEGG" id="bar:GBAA_4023"/>
<dbReference type="KEGG" id="bat:BAS3735"/>
<dbReference type="PATRIC" id="fig|198094.11.peg.3994"/>
<dbReference type="eggNOG" id="COG0167">
    <property type="taxonomic scope" value="Bacteria"/>
</dbReference>
<dbReference type="HOGENOM" id="CLU_042042_0_0_9"/>
<dbReference type="OMA" id="ERIKMGA"/>
<dbReference type="OrthoDB" id="9794954at2"/>
<dbReference type="UniPathway" id="UPA00070">
    <property type="reaction ID" value="UER00945"/>
</dbReference>
<dbReference type="Proteomes" id="UP000000427">
    <property type="component" value="Chromosome"/>
</dbReference>
<dbReference type="Proteomes" id="UP000000594">
    <property type="component" value="Chromosome"/>
</dbReference>
<dbReference type="GO" id="GO:0005737">
    <property type="term" value="C:cytoplasm"/>
    <property type="evidence" value="ECO:0007669"/>
    <property type="project" value="UniProtKB-SubCell"/>
</dbReference>
<dbReference type="GO" id="GO:0004589">
    <property type="term" value="F:dihydroorotate dehydrogenase (NAD+) activity"/>
    <property type="evidence" value="ECO:0007669"/>
    <property type="project" value="UniProtKB-EC"/>
</dbReference>
<dbReference type="GO" id="GO:0006207">
    <property type="term" value="P:'de novo' pyrimidine nucleobase biosynthetic process"/>
    <property type="evidence" value="ECO:0007669"/>
    <property type="project" value="InterPro"/>
</dbReference>
<dbReference type="GO" id="GO:0044205">
    <property type="term" value="P:'de novo' UMP biosynthetic process"/>
    <property type="evidence" value="ECO:0007669"/>
    <property type="project" value="UniProtKB-UniRule"/>
</dbReference>
<dbReference type="CDD" id="cd04740">
    <property type="entry name" value="DHOD_1B_like"/>
    <property type="match status" value="1"/>
</dbReference>
<dbReference type="FunFam" id="3.20.20.70:FF:000069">
    <property type="entry name" value="Dihydroorotate dehydrogenase"/>
    <property type="match status" value="1"/>
</dbReference>
<dbReference type="Gene3D" id="3.20.20.70">
    <property type="entry name" value="Aldolase class I"/>
    <property type="match status" value="1"/>
</dbReference>
<dbReference type="HAMAP" id="MF_00224">
    <property type="entry name" value="DHO_dh_type1"/>
    <property type="match status" value="1"/>
</dbReference>
<dbReference type="InterPro" id="IPR013785">
    <property type="entry name" value="Aldolase_TIM"/>
</dbReference>
<dbReference type="InterPro" id="IPR050074">
    <property type="entry name" value="DHO_dehydrogenase"/>
</dbReference>
<dbReference type="InterPro" id="IPR033888">
    <property type="entry name" value="DHOD_1B"/>
</dbReference>
<dbReference type="InterPro" id="IPR024920">
    <property type="entry name" value="Dihydroorotate_DH_1"/>
</dbReference>
<dbReference type="InterPro" id="IPR012135">
    <property type="entry name" value="Dihydroorotate_DH_1_2"/>
</dbReference>
<dbReference type="InterPro" id="IPR005720">
    <property type="entry name" value="Dihydroorotate_DH_cat"/>
</dbReference>
<dbReference type="InterPro" id="IPR001295">
    <property type="entry name" value="Dihydroorotate_DH_CS"/>
</dbReference>
<dbReference type="InterPro" id="IPR049622">
    <property type="entry name" value="Dihydroorotate_DH_I"/>
</dbReference>
<dbReference type="NCBIfam" id="NF005574">
    <property type="entry name" value="PRK07259.1"/>
    <property type="match status" value="1"/>
</dbReference>
<dbReference type="NCBIfam" id="TIGR01037">
    <property type="entry name" value="pyrD_sub1_fam"/>
    <property type="match status" value="1"/>
</dbReference>
<dbReference type="PANTHER" id="PTHR48109:SF1">
    <property type="entry name" value="DIHYDROOROTATE DEHYDROGENASE (FUMARATE)"/>
    <property type="match status" value="1"/>
</dbReference>
<dbReference type="PANTHER" id="PTHR48109">
    <property type="entry name" value="DIHYDROOROTATE DEHYDROGENASE (QUINONE), MITOCHONDRIAL-RELATED"/>
    <property type="match status" value="1"/>
</dbReference>
<dbReference type="Pfam" id="PF01180">
    <property type="entry name" value="DHO_dh"/>
    <property type="match status" value="1"/>
</dbReference>
<dbReference type="PIRSF" id="PIRSF000164">
    <property type="entry name" value="DHO_oxidase"/>
    <property type="match status" value="1"/>
</dbReference>
<dbReference type="SUPFAM" id="SSF51395">
    <property type="entry name" value="FMN-linked oxidoreductases"/>
    <property type="match status" value="1"/>
</dbReference>
<dbReference type="PROSITE" id="PS00911">
    <property type="entry name" value="DHODEHASE_1"/>
    <property type="match status" value="1"/>
</dbReference>
<dbReference type="PROSITE" id="PS00912">
    <property type="entry name" value="DHODEHASE_2"/>
    <property type="match status" value="1"/>
</dbReference>
<proteinExistence type="inferred from homology"/>
<accession>Q81WF4</accession>
<accession>Q6HUK2</accession>
<accession>Q6KNT7</accession>
<feature type="chain" id="PRO_1000024123" description="Dihydroorotate dehydrogenase B (NAD(+)), catalytic subunit">
    <location>
        <begin position="1"/>
        <end position="309"/>
    </location>
</feature>
<feature type="active site" description="Nucleophile">
    <location>
        <position position="130"/>
    </location>
</feature>
<feature type="binding site" evidence="1">
    <location>
        <position position="21"/>
    </location>
    <ligand>
        <name>FMN</name>
        <dbReference type="ChEBI" id="CHEBI:58210"/>
    </ligand>
</feature>
<feature type="binding site" evidence="1">
    <location>
        <begin position="45"/>
        <end position="46"/>
    </location>
    <ligand>
        <name>FMN</name>
        <dbReference type="ChEBI" id="CHEBI:58210"/>
    </ligand>
</feature>
<feature type="binding site" evidence="1">
    <location>
        <position position="45"/>
    </location>
    <ligand>
        <name>substrate</name>
    </ligand>
</feature>
<feature type="binding site" evidence="1">
    <location>
        <begin position="69"/>
        <end position="73"/>
    </location>
    <ligand>
        <name>substrate</name>
    </ligand>
</feature>
<feature type="binding site" evidence="1">
    <location>
        <position position="99"/>
    </location>
    <ligand>
        <name>FMN</name>
        <dbReference type="ChEBI" id="CHEBI:58210"/>
    </ligand>
</feature>
<feature type="binding site" evidence="1">
    <location>
        <position position="127"/>
    </location>
    <ligand>
        <name>FMN</name>
        <dbReference type="ChEBI" id="CHEBI:58210"/>
    </ligand>
</feature>
<feature type="binding site" evidence="1">
    <location>
        <position position="127"/>
    </location>
    <ligand>
        <name>substrate</name>
    </ligand>
</feature>
<feature type="binding site" evidence="1">
    <location>
        <position position="165"/>
    </location>
    <ligand>
        <name>FMN</name>
        <dbReference type="ChEBI" id="CHEBI:58210"/>
    </ligand>
</feature>
<feature type="binding site" evidence="1">
    <location>
        <position position="191"/>
    </location>
    <ligand>
        <name>FMN</name>
        <dbReference type="ChEBI" id="CHEBI:58210"/>
    </ligand>
</feature>
<feature type="binding site" evidence="1">
    <location>
        <begin position="192"/>
        <end position="193"/>
    </location>
    <ligand>
        <name>substrate</name>
    </ligand>
</feature>
<feature type="binding site" evidence="1">
    <location>
        <position position="217"/>
    </location>
    <ligand>
        <name>FMN</name>
        <dbReference type="ChEBI" id="CHEBI:58210"/>
    </ligand>
</feature>
<feature type="binding site" evidence="1">
    <location>
        <begin position="243"/>
        <end position="244"/>
    </location>
    <ligand>
        <name>FMN</name>
        <dbReference type="ChEBI" id="CHEBI:58210"/>
    </ligand>
</feature>
<feature type="binding site" evidence="1">
    <location>
        <begin position="265"/>
        <end position="266"/>
    </location>
    <ligand>
        <name>FMN</name>
        <dbReference type="ChEBI" id="CHEBI:58210"/>
    </ligand>
</feature>
<sequence length="309" mass="32990">MNRLQVELPGLSLKNPIIPASGCFGFGREYAQFYDLSVLGSIMIKATTEQPRYGNPTPRVAETPGGMLNAIGLQNPGLEKVMNSELPWLEQFDLPIIANVAGSQAEDYVAVAKEISKAPNVHALELNISCPNVKTGGIAFGTNPEIAADLTKRVKEVSEVPVYVKLSPNVANIVEIAKAIENAGADGLTMINTLLGMRLDLKTAKPILANRTGGLSGPAIKPVAIRMVHEVSQAVNIPIIGMGGIETAEDVIEFFYAGASAVAVGTANFIDPFVCPTIIEELPALLDELGFDHISECQGRSWKQTCHSR</sequence>
<organism>
    <name type="scientific">Bacillus anthracis</name>
    <dbReference type="NCBI Taxonomy" id="1392"/>
    <lineage>
        <taxon>Bacteria</taxon>
        <taxon>Bacillati</taxon>
        <taxon>Bacillota</taxon>
        <taxon>Bacilli</taxon>
        <taxon>Bacillales</taxon>
        <taxon>Bacillaceae</taxon>
        <taxon>Bacillus</taxon>
        <taxon>Bacillus cereus group</taxon>
    </lineage>
</organism>
<keyword id="KW-0963">Cytoplasm</keyword>
<keyword id="KW-0285">Flavoprotein</keyword>
<keyword id="KW-0288">FMN</keyword>
<keyword id="KW-0520">NAD</keyword>
<keyword id="KW-0560">Oxidoreductase</keyword>
<keyword id="KW-0665">Pyrimidine biosynthesis</keyword>
<keyword id="KW-1185">Reference proteome</keyword>
<evidence type="ECO:0000250" key="1"/>
<evidence type="ECO:0000305" key="2"/>
<comment type="function">
    <text evidence="1">Catalyzes the conversion of dihydroorotate to orotate with NAD(+) as electron acceptor.</text>
</comment>
<comment type="catalytic activity">
    <reaction>
        <text>(S)-dihydroorotate + NAD(+) = orotate + NADH + H(+)</text>
        <dbReference type="Rhea" id="RHEA:13513"/>
        <dbReference type="ChEBI" id="CHEBI:15378"/>
        <dbReference type="ChEBI" id="CHEBI:30839"/>
        <dbReference type="ChEBI" id="CHEBI:30864"/>
        <dbReference type="ChEBI" id="CHEBI:57540"/>
        <dbReference type="ChEBI" id="CHEBI:57945"/>
        <dbReference type="EC" id="1.3.1.14"/>
    </reaction>
</comment>
<comment type="cofactor">
    <cofactor evidence="1">
        <name>FMN</name>
        <dbReference type="ChEBI" id="CHEBI:58210"/>
    </cofactor>
    <text evidence="1">Binds 1 FMN per subunit.</text>
</comment>
<comment type="pathway">
    <text>Pyrimidine metabolism; UMP biosynthesis via de novo pathway; orotate from (S)-dihydroorotate (NAD(+) route): step 1/1.</text>
</comment>
<comment type="subunit">
    <text evidence="1">Heterotetramer of 2 PyrK and 2 PyrD type B subunits.</text>
</comment>
<comment type="subcellular location">
    <subcellularLocation>
        <location evidence="1">Cytoplasm</location>
    </subcellularLocation>
</comment>
<comment type="similarity">
    <text evidence="2">Belongs to the dihydroorotate dehydrogenase family. Type 1 subfamily.</text>
</comment>
<protein>
    <recommendedName>
        <fullName>Dihydroorotate dehydrogenase B (NAD(+)), catalytic subunit</fullName>
        <shortName>DHOD B</shortName>
        <shortName>DHODase B</shortName>
        <shortName>DHOdehase B</shortName>
        <ecNumber>1.3.1.14</ecNumber>
    </recommendedName>
    <alternativeName>
        <fullName>Dihydroorotate oxidase B</fullName>
    </alternativeName>
    <alternativeName>
        <fullName>Orotate reductase (NADH)</fullName>
    </alternativeName>
</protein>